<sequence length="199" mass="20456">MMQHLRPALVMTAALCLITGIIYPGLITGAAQLLFPAQANGSLIERDGRVVGSALIGQRFTTPNYFHGRPSAAGADGYDAMASGGSNKGPTDSTLAARIAERVDSVVVDGGVRGRIPADLVTASGSGLDPDISPASAALQVARVAQARELPAATVTLLVAQHTTPRQLGVLGEPRVNVLRLNLALDSLSATSPSVRSVR</sequence>
<accession>C1ABQ7</accession>
<comment type="function">
    <text evidence="1">Part of the high-affinity ATP-driven potassium transport (or Kdp) system, which catalyzes the hydrolysis of ATP coupled with the electrogenic transport of potassium into the cytoplasm. This subunit acts as a catalytic chaperone that increases the ATP-binding affinity of the ATP-hydrolyzing subunit KdpB by the formation of a transient KdpB/KdpC/ATP ternary complex.</text>
</comment>
<comment type="subunit">
    <text evidence="1">The system is composed of three essential subunits: KdpA, KdpB and KdpC.</text>
</comment>
<comment type="subcellular location">
    <subcellularLocation>
        <location evidence="1">Cell inner membrane</location>
        <topology evidence="1">Single-pass membrane protein</topology>
    </subcellularLocation>
</comment>
<comment type="similarity">
    <text evidence="1">Belongs to the KdpC family.</text>
</comment>
<reference key="1">
    <citation type="submission" date="2006-03" db="EMBL/GenBank/DDBJ databases">
        <title>Complete genome sequence of Gemmatimonas aurantiaca T-27 that represents a novel phylum Gemmatimonadetes.</title>
        <authorList>
            <person name="Takasaki K."/>
            <person name="Ichikawa N."/>
            <person name="Miura H."/>
            <person name="Matsushita S."/>
            <person name="Watanabe Y."/>
            <person name="Oguchi A."/>
            <person name="Ankai A."/>
            <person name="Yashiro I."/>
            <person name="Takahashi M."/>
            <person name="Terui Y."/>
            <person name="Fukui S."/>
            <person name="Yokoyama H."/>
            <person name="Tanikawa S."/>
            <person name="Hanada S."/>
            <person name="Kamagata Y."/>
            <person name="Fujita N."/>
        </authorList>
    </citation>
    <scope>NUCLEOTIDE SEQUENCE [LARGE SCALE GENOMIC DNA]</scope>
    <source>
        <strain>DSM 14586 / JCM 11422 / NBRC 100505 / T-27</strain>
    </source>
</reference>
<organism>
    <name type="scientific">Gemmatimonas aurantiaca (strain DSM 14586 / JCM 11422 / NBRC 100505 / T-27)</name>
    <dbReference type="NCBI Taxonomy" id="379066"/>
    <lineage>
        <taxon>Bacteria</taxon>
        <taxon>Pseudomonadati</taxon>
        <taxon>Gemmatimonadota</taxon>
        <taxon>Gemmatimonadia</taxon>
        <taxon>Gemmatimonadales</taxon>
        <taxon>Gemmatimonadaceae</taxon>
        <taxon>Gemmatimonas</taxon>
    </lineage>
</organism>
<protein>
    <recommendedName>
        <fullName evidence="1">Potassium-transporting ATPase KdpC subunit</fullName>
    </recommendedName>
    <alternativeName>
        <fullName evidence="1">ATP phosphohydrolase [potassium-transporting] C chain</fullName>
    </alternativeName>
    <alternativeName>
        <fullName evidence="1">Potassium-binding and translocating subunit C</fullName>
    </alternativeName>
    <alternativeName>
        <fullName evidence="1">Potassium-translocating ATPase C chain</fullName>
    </alternativeName>
</protein>
<evidence type="ECO:0000255" key="1">
    <source>
        <dbReference type="HAMAP-Rule" id="MF_00276"/>
    </source>
</evidence>
<feature type="chain" id="PRO_1000204794" description="Potassium-transporting ATPase KdpC subunit">
    <location>
        <begin position="1"/>
        <end position="199"/>
    </location>
</feature>
<feature type="transmembrane region" description="Helical" evidence="1">
    <location>
        <begin position="7"/>
        <end position="27"/>
    </location>
</feature>
<keyword id="KW-0067">ATP-binding</keyword>
<keyword id="KW-0997">Cell inner membrane</keyword>
<keyword id="KW-1003">Cell membrane</keyword>
<keyword id="KW-0406">Ion transport</keyword>
<keyword id="KW-0472">Membrane</keyword>
<keyword id="KW-0547">Nucleotide-binding</keyword>
<keyword id="KW-0630">Potassium</keyword>
<keyword id="KW-0633">Potassium transport</keyword>
<keyword id="KW-1185">Reference proteome</keyword>
<keyword id="KW-0812">Transmembrane</keyword>
<keyword id="KW-1133">Transmembrane helix</keyword>
<keyword id="KW-0813">Transport</keyword>
<dbReference type="EMBL" id="AP009153">
    <property type="protein sequence ID" value="BAH39934.1"/>
    <property type="molecule type" value="Genomic_DNA"/>
</dbReference>
<dbReference type="RefSeq" id="WP_015894703.1">
    <property type="nucleotide sequence ID" value="NC_012489.1"/>
</dbReference>
<dbReference type="SMR" id="C1ABQ7"/>
<dbReference type="STRING" id="379066.GAU_2892"/>
<dbReference type="KEGG" id="gau:GAU_2892"/>
<dbReference type="eggNOG" id="COG2156">
    <property type="taxonomic scope" value="Bacteria"/>
</dbReference>
<dbReference type="HOGENOM" id="CLU_077094_2_0_0"/>
<dbReference type="OrthoDB" id="9788285at2"/>
<dbReference type="Proteomes" id="UP000002209">
    <property type="component" value="Chromosome"/>
</dbReference>
<dbReference type="GO" id="GO:0005886">
    <property type="term" value="C:plasma membrane"/>
    <property type="evidence" value="ECO:0007669"/>
    <property type="project" value="UniProtKB-SubCell"/>
</dbReference>
<dbReference type="GO" id="GO:0005524">
    <property type="term" value="F:ATP binding"/>
    <property type="evidence" value="ECO:0007669"/>
    <property type="project" value="UniProtKB-UniRule"/>
</dbReference>
<dbReference type="GO" id="GO:0008556">
    <property type="term" value="F:P-type potassium transmembrane transporter activity"/>
    <property type="evidence" value="ECO:0007669"/>
    <property type="project" value="InterPro"/>
</dbReference>
<dbReference type="HAMAP" id="MF_00276">
    <property type="entry name" value="KdpC"/>
    <property type="match status" value="1"/>
</dbReference>
<dbReference type="InterPro" id="IPR003820">
    <property type="entry name" value="KdpC"/>
</dbReference>
<dbReference type="NCBIfam" id="TIGR00681">
    <property type="entry name" value="kdpC"/>
    <property type="match status" value="1"/>
</dbReference>
<dbReference type="NCBIfam" id="NF001454">
    <property type="entry name" value="PRK00315.1"/>
    <property type="match status" value="1"/>
</dbReference>
<dbReference type="PANTHER" id="PTHR30042">
    <property type="entry name" value="POTASSIUM-TRANSPORTING ATPASE C CHAIN"/>
    <property type="match status" value="1"/>
</dbReference>
<dbReference type="PANTHER" id="PTHR30042:SF2">
    <property type="entry name" value="POTASSIUM-TRANSPORTING ATPASE KDPC SUBUNIT"/>
    <property type="match status" value="1"/>
</dbReference>
<dbReference type="Pfam" id="PF02669">
    <property type="entry name" value="KdpC"/>
    <property type="match status" value="1"/>
</dbReference>
<dbReference type="PIRSF" id="PIRSF001296">
    <property type="entry name" value="K_ATPase_KdpC"/>
    <property type="match status" value="1"/>
</dbReference>
<proteinExistence type="inferred from homology"/>
<name>KDPC_GEMAT</name>
<gene>
    <name evidence="1" type="primary">kdpC</name>
    <name type="ordered locus">GAU_2892</name>
</gene>